<accession>A0QNJ5</accession>
<accession>I7FCD4</accession>
<keyword id="KW-1185">Reference proteome</keyword>
<keyword id="KW-0964">Secreted</keyword>
<gene>
    <name evidence="7" type="primary">esxB</name>
    <name type="ordered locus">MSMEG_0065</name>
    <name type="ordered locus">MSMEI_0066</name>
</gene>
<sequence>MAAMNTDAAVLAKEAANFERISGELKGVIAQVESTGSALAAQMVGQAGTAAQAALARFHEAAAKQVQELNEISANIHTSGTQYTSTDEDQAGTLASSMNI</sequence>
<organism>
    <name type="scientific">Mycolicibacterium smegmatis (strain ATCC 700084 / mc(2)155)</name>
    <name type="common">Mycobacterium smegmatis</name>
    <dbReference type="NCBI Taxonomy" id="246196"/>
    <lineage>
        <taxon>Bacteria</taxon>
        <taxon>Bacillati</taxon>
        <taxon>Actinomycetota</taxon>
        <taxon>Actinomycetes</taxon>
        <taxon>Mycobacteriales</taxon>
        <taxon>Mycobacteriaceae</taxon>
        <taxon>Mycolicibacterium</taxon>
    </lineage>
</organism>
<reference key="1">
    <citation type="submission" date="2006-10" db="EMBL/GenBank/DDBJ databases">
        <authorList>
            <person name="Fleischmann R.D."/>
            <person name="Dodson R.J."/>
            <person name="Haft D.H."/>
            <person name="Merkel J.S."/>
            <person name="Nelson W.C."/>
            <person name="Fraser C.M."/>
        </authorList>
    </citation>
    <scope>NUCLEOTIDE SEQUENCE [LARGE SCALE GENOMIC DNA]</scope>
    <source>
        <strain>ATCC 700084 / mc(2)155</strain>
    </source>
</reference>
<reference key="2">
    <citation type="journal article" date="2007" name="Genome Biol.">
        <title>Interrupted coding sequences in Mycobacterium smegmatis: authentic mutations or sequencing errors?</title>
        <authorList>
            <person name="Deshayes C."/>
            <person name="Perrodou E."/>
            <person name="Gallien S."/>
            <person name="Euphrasie D."/>
            <person name="Schaeffer C."/>
            <person name="Van-Dorsselaer A."/>
            <person name="Poch O."/>
            <person name="Lecompte O."/>
            <person name="Reyrat J.-M."/>
        </authorList>
    </citation>
    <scope>NUCLEOTIDE SEQUENCE [LARGE SCALE GENOMIC DNA]</scope>
    <source>
        <strain>ATCC 700084 / mc(2)155</strain>
    </source>
</reference>
<reference key="3">
    <citation type="journal article" date="2009" name="Genome Res.">
        <title>Ortho-proteogenomics: multiple proteomes investigation through orthology and a new MS-based protocol.</title>
        <authorList>
            <person name="Gallien S."/>
            <person name="Perrodou E."/>
            <person name="Carapito C."/>
            <person name="Deshayes C."/>
            <person name="Reyrat J.-M."/>
            <person name="Van Dorsselaer A."/>
            <person name="Poch O."/>
            <person name="Schaeffer C."/>
            <person name="Lecompte O."/>
        </authorList>
    </citation>
    <scope>NUCLEOTIDE SEQUENCE [LARGE SCALE GENOMIC DNA]</scope>
    <source>
        <strain>ATCC 700084 / mc(2)155</strain>
    </source>
</reference>
<reference key="4">
    <citation type="journal article" date="2004" name="Proc. Natl. Acad. Sci. U.S.A.">
        <title>The RD1 virulence locus of Mycobacterium tuberculosis regulates DNA transfer in Mycobacterium smegmatis.</title>
        <authorList>
            <person name="Flint J.L."/>
            <person name="Kowalski J.C."/>
            <person name="Karnati P.K."/>
            <person name="Derbyshire K.M."/>
        </authorList>
    </citation>
    <scope>FUNCTION</scope>
    <scope>DISRUPTION PHENOTYPE</scope>
    <source>
        <strain>ATCC 700084 / mc(2)155</strain>
    </source>
</reference>
<reference key="5">
    <citation type="journal article" date="2005" name="J. Bacteriol.">
        <title>A protein secretion pathway critical for Mycobacterium tuberculosis virulence is conserved and functional in Mycobacterium smegmatis.</title>
        <authorList>
            <person name="Converse S.E."/>
            <person name="Cox J.S."/>
        </authorList>
    </citation>
    <scope>SUBCELLULAR LOCATION</scope>
    <scope>DISRUPTION PHENOTYPE</scope>
    <source>
        <strain>ATCC 700084 / mc(2)155</strain>
    </source>
</reference>
<reference key="6">
    <citation type="journal article" date="2010" name="J. Bacteriol.">
        <title>Conservation of structure and protein-protein interactions mediated by the secreted mycobacterial proteins EsxA, EsxB, and EspA.</title>
        <authorList>
            <person name="Callahan B."/>
            <person name="Nguyen K."/>
            <person name="Collins A."/>
            <person name="Valdes K."/>
            <person name="Caplow M."/>
            <person name="Crossman D.K."/>
            <person name="Steyn A.J."/>
            <person name="Eisele L."/>
            <person name="Derbyshire K.M."/>
        </authorList>
    </citation>
    <scope>SUBUNIT</scope>
</reference>
<reference key="7">
    <citation type="journal article" date="2010" name="FEBS Lett.">
        <title>Stoichiometric protein complex formation and over-expression using the prokaryotic native operon structure.</title>
        <authorList>
            <person name="Poulsen C."/>
            <person name="Holton S."/>
            <person name="Geerlof A."/>
            <person name="Wilmanns M."/>
            <person name="Song Y.H."/>
        </authorList>
    </citation>
    <scope>SUBUNIT</scope>
    <source>
        <strain>ATCC 700084 / mc(2)155</strain>
    </source>
</reference>
<reference key="8">
    <citation type="journal article" date="2012" name="J. Biol. Chem.">
        <title>Mycobacterium tuberculosis ESAT-6 exhibits a unique membrane-interacting activity that is not found in its ortholog from non-pathogenic Mycobacterium smegmatis.</title>
        <authorList>
            <person name="De Leon J."/>
            <person name="Jiang G."/>
            <person name="Ma Y."/>
            <person name="Rubin E."/>
            <person name="Fortune S."/>
            <person name="Sun J."/>
        </authorList>
    </citation>
    <scope>SUBUNIT</scope>
</reference>
<proteinExistence type="evidence at protein level"/>
<dbReference type="EMBL" id="CP000480">
    <property type="protein sequence ID" value="ABK75930.1"/>
    <property type="molecule type" value="Genomic_DNA"/>
</dbReference>
<dbReference type="EMBL" id="CP001663">
    <property type="protein sequence ID" value="AFP36548.1"/>
    <property type="status" value="ALT_INIT"/>
    <property type="molecule type" value="Genomic_DNA"/>
</dbReference>
<dbReference type="RefSeq" id="WP_003891393.1">
    <property type="nucleotide sequence ID" value="NZ_SIJM01000058.1"/>
</dbReference>
<dbReference type="RefSeq" id="YP_884483.1">
    <property type="nucleotide sequence ID" value="NC_008596.1"/>
</dbReference>
<dbReference type="SMR" id="A0QNJ5"/>
<dbReference type="STRING" id="246196.MSMEG_0065"/>
<dbReference type="PaxDb" id="246196-MSMEI_0066"/>
<dbReference type="KEGG" id="msb:LJ00_00325"/>
<dbReference type="KEGG" id="msg:MSMEI_0066"/>
<dbReference type="KEGG" id="msm:MSMEG_0065"/>
<dbReference type="PATRIC" id="fig|246196.19.peg.63"/>
<dbReference type="eggNOG" id="COG4842">
    <property type="taxonomic scope" value="Bacteria"/>
</dbReference>
<dbReference type="OrthoDB" id="4640046at2"/>
<dbReference type="Proteomes" id="UP000000757">
    <property type="component" value="Chromosome"/>
</dbReference>
<dbReference type="Proteomes" id="UP000006158">
    <property type="component" value="Chromosome"/>
</dbReference>
<dbReference type="GO" id="GO:0005576">
    <property type="term" value="C:extracellular region"/>
    <property type="evidence" value="ECO:0007669"/>
    <property type="project" value="UniProtKB-SubCell"/>
</dbReference>
<dbReference type="Gene3D" id="1.10.287.1060">
    <property type="entry name" value="ESAT-6-like"/>
    <property type="match status" value="1"/>
</dbReference>
<dbReference type="InterPro" id="IPR036689">
    <property type="entry name" value="ESAT-6-like_sf"/>
</dbReference>
<dbReference type="InterPro" id="IPR010310">
    <property type="entry name" value="T7SS_ESAT-6-like"/>
</dbReference>
<dbReference type="NCBIfam" id="TIGR03930">
    <property type="entry name" value="WXG100_ESAT6"/>
    <property type="match status" value="1"/>
</dbReference>
<dbReference type="Pfam" id="PF06013">
    <property type="entry name" value="WXG100"/>
    <property type="match status" value="1"/>
</dbReference>
<dbReference type="SUPFAM" id="SSF140453">
    <property type="entry name" value="EsxAB dimer-like"/>
    <property type="match status" value="1"/>
</dbReference>
<evidence type="ECO:0000256" key="1">
    <source>
        <dbReference type="SAM" id="MobiDB-lite"/>
    </source>
</evidence>
<evidence type="ECO:0000269" key="2">
    <source>
    </source>
</evidence>
<evidence type="ECO:0000269" key="3">
    <source>
    </source>
</evidence>
<evidence type="ECO:0000269" key="4">
    <source>
    </source>
</evidence>
<evidence type="ECO:0000269" key="5">
    <source>
    </source>
</evidence>
<evidence type="ECO:0000269" key="6">
    <source>
    </source>
</evidence>
<evidence type="ECO:0000303" key="7">
    <source>
    </source>
</evidence>
<evidence type="ECO:0000305" key="8"/>
<evidence type="ECO:0000305" key="9">
    <source>
    </source>
</evidence>
<comment type="function">
    <text evidence="2">An exported protein. Plays a role in DNA conjugation, in at least a donor strain (PubMed:15314236).</text>
</comment>
<comment type="subunit">
    <text evidence="4 5 6">Forms a tight 1:1 complex with EsxA (PubMed:19854905, PubMed:20085764, PubMed:23150662). An artificial EsxA-EsxB heterodimer interacts with EspA (PubMed:19854905).</text>
</comment>
<comment type="subcellular location">
    <subcellularLocation>
        <location evidence="3">Secreted</location>
    </subcellularLocation>
    <text evidence="3 8">Probably secreted via the ESX-1 / type VII secretion system (T7SS). Accumulates in the cell and is secreted when grown in Saunton's medium, when grown in 7H9 medium protein only accumulates intracellularly (PubMed:15687187).</text>
</comment>
<comment type="disruption phenotype">
    <text evidence="2 3">Increases efficiency of DNA conjugation when disrupted in donor strain (PubMed:15314236). Loss of detectable protein for EsxA and EsxB (PubMed:15687187).</text>
</comment>
<comment type="miscellaneous">
    <text evidence="4">To improve expression in E.coli the proteins were cloned as a single protein in the (non-native) order esxA-esxB with a cleavable thrombin tag (PubMed:19854905).</text>
</comment>
<comment type="miscellaneous">
    <text evidence="9">DNA conjugation in M.smegmatis is unidirectional with distinct donor and recipient strains; mc(2)155 is a donor strain while MKD8 is a recipient strain. Mutations in a donor strain that alter DNA transfer do not always alter DNA transfer in a recipient strain.</text>
</comment>
<comment type="similarity">
    <text evidence="8">Belongs to the WXG100 family. CFP-10 subfamily.</text>
</comment>
<comment type="sequence caution" evidence="8">
    <conflict type="erroneous initiation">
        <sequence resource="EMBL-CDS" id="AFP36548"/>
    </conflict>
    <text>Truncated N-terminus.</text>
</comment>
<name>ESXB_MYCS2</name>
<feature type="chain" id="PRO_0000437933" description="ESAT-6-like protein EsxB">
    <location>
        <begin position="1"/>
        <end position="100"/>
    </location>
</feature>
<feature type="region of interest" description="Disordered" evidence="1">
    <location>
        <begin position="80"/>
        <end position="100"/>
    </location>
</feature>
<protein>
    <recommendedName>
        <fullName evidence="7">ESAT-6-like protein EsxB</fullName>
    </recommendedName>
</protein>